<feature type="chain" id="PRO_1000070365" description="Pyridoxal 5'-phosphate synthase subunit PdxS">
    <location>
        <begin position="1"/>
        <end position="291"/>
    </location>
</feature>
<feature type="active site" description="Schiff-base intermediate with D-ribose 5-phosphate" evidence="1">
    <location>
        <position position="80"/>
    </location>
</feature>
<feature type="binding site" evidence="1">
    <location>
        <position position="23"/>
    </location>
    <ligand>
        <name>D-ribose 5-phosphate</name>
        <dbReference type="ChEBI" id="CHEBI:78346"/>
    </ligand>
</feature>
<feature type="binding site" evidence="1">
    <location>
        <position position="152"/>
    </location>
    <ligand>
        <name>D-ribose 5-phosphate</name>
        <dbReference type="ChEBI" id="CHEBI:78346"/>
    </ligand>
</feature>
<feature type="binding site" evidence="1">
    <location>
        <position position="164"/>
    </location>
    <ligand>
        <name>D-glyceraldehyde 3-phosphate</name>
        <dbReference type="ChEBI" id="CHEBI:59776"/>
    </ligand>
</feature>
<feature type="binding site" evidence="1">
    <location>
        <position position="213"/>
    </location>
    <ligand>
        <name>D-ribose 5-phosphate</name>
        <dbReference type="ChEBI" id="CHEBI:78346"/>
    </ligand>
</feature>
<feature type="binding site" evidence="1">
    <location>
        <begin position="234"/>
        <end position="235"/>
    </location>
    <ligand>
        <name>D-ribose 5-phosphate</name>
        <dbReference type="ChEBI" id="CHEBI:78346"/>
    </ligand>
</feature>
<name>PDXS_BIFAA</name>
<proteinExistence type="inferred from homology"/>
<comment type="function">
    <text evidence="1">Catalyzes the formation of pyridoxal 5'-phosphate from ribose 5-phosphate (RBP), glyceraldehyde 3-phosphate (G3P) and ammonia. The ammonia is provided by the PdxT subunit. Can also use ribulose 5-phosphate and dihydroxyacetone phosphate as substrates, resulting from enzyme-catalyzed isomerization of RBP and G3P, respectively.</text>
</comment>
<comment type="catalytic activity">
    <reaction evidence="1">
        <text>aldehydo-D-ribose 5-phosphate + D-glyceraldehyde 3-phosphate + L-glutamine = pyridoxal 5'-phosphate + L-glutamate + phosphate + 3 H2O + H(+)</text>
        <dbReference type="Rhea" id="RHEA:31507"/>
        <dbReference type="ChEBI" id="CHEBI:15377"/>
        <dbReference type="ChEBI" id="CHEBI:15378"/>
        <dbReference type="ChEBI" id="CHEBI:29985"/>
        <dbReference type="ChEBI" id="CHEBI:43474"/>
        <dbReference type="ChEBI" id="CHEBI:58273"/>
        <dbReference type="ChEBI" id="CHEBI:58359"/>
        <dbReference type="ChEBI" id="CHEBI:59776"/>
        <dbReference type="ChEBI" id="CHEBI:597326"/>
        <dbReference type="EC" id="4.3.3.6"/>
    </reaction>
</comment>
<comment type="pathway">
    <text evidence="1">Cofactor biosynthesis; pyridoxal 5'-phosphate biosynthesis.</text>
</comment>
<comment type="subunit">
    <text evidence="1">In the presence of PdxT, forms a dodecamer of heterodimers.</text>
</comment>
<comment type="similarity">
    <text evidence="1">Belongs to the PdxS/SNZ family.</text>
</comment>
<protein>
    <recommendedName>
        <fullName evidence="1">Pyridoxal 5'-phosphate synthase subunit PdxS</fullName>
        <shortName evidence="1">PLP synthase subunit PdxS</shortName>
        <ecNumber evidence="1">4.3.3.6</ecNumber>
    </recommendedName>
    <alternativeName>
        <fullName evidence="1">Pdx1</fullName>
    </alternativeName>
</protein>
<keyword id="KW-0456">Lyase</keyword>
<keyword id="KW-0663">Pyridoxal phosphate</keyword>
<keyword id="KW-1185">Reference proteome</keyword>
<keyword id="KW-0704">Schiff base</keyword>
<organism>
    <name type="scientific">Bifidobacterium adolescentis (strain ATCC 15703 / DSM 20083 / NCTC 11814 / E194a)</name>
    <dbReference type="NCBI Taxonomy" id="367928"/>
    <lineage>
        <taxon>Bacteria</taxon>
        <taxon>Bacillati</taxon>
        <taxon>Actinomycetota</taxon>
        <taxon>Actinomycetes</taxon>
        <taxon>Bifidobacteriales</taxon>
        <taxon>Bifidobacteriaceae</taxon>
        <taxon>Bifidobacterium</taxon>
    </lineage>
</organism>
<dbReference type="EC" id="4.3.3.6" evidence="1"/>
<dbReference type="EMBL" id="AP009256">
    <property type="protein sequence ID" value="BAF40188.1"/>
    <property type="molecule type" value="Genomic_DNA"/>
</dbReference>
<dbReference type="RefSeq" id="WP_011743702.1">
    <property type="nucleotide sequence ID" value="NC_008618.1"/>
</dbReference>
<dbReference type="SMR" id="A1A3A5"/>
<dbReference type="STRING" id="367928.BAD_1407"/>
<dbReference type="PaxDb" id="1680-BADO_1624"/>
<dbReference type="GeneID" id="4556550"/>
<dbReference type="KEGG" id="bad:BAD_1407"/>
<dbReference type="HOGENOM" id="CLU_055352_1_0_11"/>
<dbReference type="UniPathway" id="UPA00245"/>
<dbReference type="Proteomes" id="UP000008702">
    <property type="component" value="Chromosome"/>
</dbReference>
<dbReference type="GO" id="GO:0036381">
    <property type="term" value="F:pyridoxal 5'-phosphate synthase (glutamine hydrolysing) activity"/>
    <property type="evidence" value="ECO:0007669"/>
    <property type="project" value="UniProtKB-UniRule"/>
</dbReference>
<dbReference type="GO" id="GO:0006520">
    <property type="term" value="P:amino acid metabolic process"/>
    <property type="evidence" value="ECO:0007669"/>
    <property type="project" value="TreeGrafter"/>
</dbReference>
<dbReference type="GO" id="GO:0042823">
    <property type="term" value="P:pyridoxal phosphate biosynthetic process"/>
    <property type="evidence" value="ECO:0007669"/>
    <property type="project" value="UniProtKB-UniRule"/>
</dbReference>
<dbReference type="GO" id="GO:0008615">
    <property type="term" value="P:pyridoxine biosynthetic process"/>
    <property type="evidence" value="ECO:0007669"/>
    <property type="project" value="TreeGrafter"/>
</dbReference>
<dbReference type="CDD" id="cd04727">
    <property type="entry name" value="pdxS"/>
    <property type="match status" value="1"/>
</dbReference>
<dbReference type="FunFam" id="3.20.20.70:FF:000001">
    <property type="entry name" value="Pyridoxine biosynthesis protein PDX1"/>
    <property type="match status" value="1"/>
</dbReference>
<dbReference type="Gene3D" id="3.20.20.70">
    <property type="entry name" value="Aldolase class I"/>
    <property type="match status" value="1"/>
</dbReference>
<dbReference type="HAMAP" id="MF_01824">
    <property type="entry name" value="PdxS"/>
    <property type="match status" value="1"/>
</dbReference>
<dbReference type="InterPro" id="IPR013785">
    <property type="entry name" value="Aldolase_TIM"/>
</dbReference>
<dbReference type="InterPro" id="IPR001852">
    <property type="entry name" value="PdxS/SNZ"/>
</dbReference>
<dbReference type="InterPro" id="IPR033755">
    <property type="entry name" value="PdxS/SNZ_N"/>
</dbReference>
<dbReference type="InterPro" id="IPR011060">
    <property type="entry name" value="RibuloseP-bd_barrel"/>
</dbReference>
<dbReference type="NCBIfam" id="NF003215">
    <property type="entry name" value="PRK04180.1"/>
    <property type="match status" value="1"/>
</dbReference>
<dbReference type="NCBIfam" id="TIGR00343">
    <property type="entry name" value="pyridoxal 5'-phosphate synthase lyase subunit PdxS"/>
    <property type="match status" value="1"/>
</dbReference>
<dbReference type="PANTHER" id="PTHR31829">
    <property type="entry name" value="PYRIDOXAL 5'-PHOSPHATE SYNTHASE SUBUNIT SNZ1-RELATED"/>
    <property type="match status" value="1"/>
</dbReference>
<dbReference type="PANTHER" id="PTHR31829:SF0">
    <property type="entry name" value="PYRIDOXAL 5'-PHOSPHATE SYNTHASE SUBUNIT SNZ1-RELATED"/>
    <property type="match status" value="1"/>
</dbReference>
<dbReference type="Pfam" id="PF01680">
    <property type="entry name" value="SOR_SNZ"/>
    <property type="match status" value="1"/>
</dbReference>
<dbReference type="PIRSF" id="PIRSF029271">
    <property type="entry name" value="Pdx1"/>
    <property type="match status" value="1"/>
</dbReference>
<dbReference type="SUPFAM" id="SSF51366">
    <property type="entry name" value="Ribulose-phoshate binding barrel"/>
    <property type="match status" value="1"/>
</dbReference>
<dbReference type="PROSITE" id="PS01235">
    <property type="entry name" value="PDXS_SNZ_1"/>
    <property type="match status" value="1"/>
</dbReference>
<dbReference type="PROSITE" id="PS51129">
    <property type="entry name" value="PDXS_SNZ_2"/>
    <property type="match status" value="1"/>
</dbReference>
<reference key="1">
    <citation type="submission" date="2006-12" db="EMBL/GenBank/DDBJ databases">
        <title>Bifidobacterium adolescentis complete genome sequence.</title>
        <authorList>
            <person name="Suzuki T."/>
            <person name="Tsuda Y."/>
            <person name="Kanou N."/>
            <person name="Inoue T."/>
            <person name="Kumazaki K."/>
            <person name="Nagano S."/>
            <person name="Hirai S."/>
            <person name="Tanaka K."/>
            <person name="Watanabe K."/>
        </authorList>
    </citation>
    <scope>NUCLEOTIDE SEQUENCE [LARGE SCALE GENOMIC DNA]</scope>
    <source>
        <strain>ATCC 15703 / DSM 20083 / NCTC 11814 / E194a</strain>
    </source>
</reference>
<accession>A1A3A5</accession>
<sequence length="291" mass="31180">MANNRNELNKNLAQMLKGGVIMDVTTPEQAKIAQDAGACAVMALERIPADIRAAGGVSRMSDPAMIKGIQEAVSIPVMAKVRIGHIAEARILQAIEIDYIDESEVLSPADDVYHIDKNRFDVPFVCGAKNLGEALRRVAEGASMIRTKGEPGTGDVIQAVRHMRTMNKQIRELVSLRDDEVYEAAKQLAVPYDLAKYVHDNGRLPVVNFAAGGVATPADAALMMELGAEGVFVGSGIFKSGDPAKRAAAIVQATANWQDAELLARLSENLGEAMVGINEDEIETIMAARGE</sequence>
<evidence type="ECO:0000255" key="1">
    <source>
        <dbReference type="HAMAP-Rule" id="MF_01824"/>
    </source>
</evidence>
<gene>
    <name evidence="1" type="primary">pdxS</name>
    <name type="ordered locus">BAD_1407</name>
</gene>